<accession>P98070</accession>
<comment type="function">
    <text evidence="7 9">Metalloprotease involved in pattern formation in gastrula and later differentiation of developing organs. Able to cleave chordin (chrd), suggesting that it may act in dorsoventral patterning during early development by regulating the chordin (chrd) activity.</text>
</comment>
<comment type="cofactor">
    <cofactor evidence="5">
        <name>Zn(2+)</name>
        <dbReference type="ChEBI" id="CHEBI:29105"/>
    </cofactor>
    <text evidence="5">Binds 1 zinc ion per subunit.</text>
</comment>
<comment type="subunit">
    <text evidence="8">Interacts with olfml3/ont1.</text>
</comment>
<comment type="interaction">
    <interactant intactId="EBI-1997775">
        <id>P98070</id>
    </interactant>
    <interactant intactId="EBI-1997734">
        <id>B5MFE9</id>
        <label>olfml3</label>
    </interactant>
    <organismsDiffer>false</organismsDiffer>
    <experiments>3</experiments>
</comment>
<comment type="subcellular location">
    <subcellularLocation>
        <location evidence="1">Golgi apparatus</location>
        <location evidence="1">trans-Golgi network</location>
    </subcellularLocation>
    <subcellularLocation>
        <location evidence="1">Secreted</location>
        <location evidence="1">Extracellular space</location>
        <location evidence="1">Extracellular matrix</location>
    </subcellularLocation>
</comment>
<comment type="developmental stage">
    <text>Blastula, early gastrula and hatched tadpoles; little or no expression in morula and late gastrula.</text>
</comment>
<comment type="PTM">
    <text evidence="1">Proteolytically activated in the trans-Golgi network by furin-like/paired basic proprotein convertases, cleavage is not required for secretion.</text>
</comment>
<feature type="signal peptide" evidence="2">
    <location>
        <begin position="1"/>
        <end status="unknown"/>
    </location>
</feature>
<feature type="propeptide" id="PRO_0000028893" evidence="2">
    <location>
        <begin status="unknown"/>
        <end position="83"/>
    </location>
</feature>
<feature type="chain" id="PRO_0000028894" description="Bone morphogenetic protein 1">
    <location>
        <begin position="84"/>
        <end position="707"/>
    </location>
</feature>
<feature type="domain" description="Peptidase M12A" evidence="5">
    <location>
        <begin position="84"/>
        <end position="283"/>
    </location>
</feature>
<feature type="domain" description="CUB 1" evidence="3">
    <location>
        <begin position="285"/>
        <end position="397"/>
    </location>
</feature>
<feature type="domain" description="CUB 2" evidence="3">
    <location>
        <begin position="398"/>
        <end position="509"/>
    </location>
</feature>
<feature type="domain" description="EGF-like; calcium-binding" evidence="4">
    <location>
        <begin position="510"/>
        <end position="551"/>
    </location>
</feature>
<feature type="domain" description="CUB 3" evidence="3">
    <location>
        <begin position="554"/>
        <end position="666"/>
    </location>
</feature>
<feature type="region of interest" description="Disordered" evidence="6">
    <location>
        <begin position="57"/>
        <end position="90"/>
    </location>
</feature>
<feature type="region of interest" description="Disordered" evidence="6">
    <location>
        <begin position="682"/>
        <end position="707"/>
    </location>
</feature>
<feature type="compositionally biased region" description="Basic residues" evidence="6">
    <location>
        <begin position="68"/>
        <end position="81"/>
    </location>
</feature>
<feature type="compositionally biased region" description="Basic residues" evidence="6">
    <location>
        <begin position="690"/>
        <end position="707"/>
    </location>
</feature>
<feature type="active site" evidence="5">
    <location>
        <position position="177"/>
    </location>
</feature>
<feature type="binding site" evidence="5">
    <location>
        <position position="176"/>
    </location>
    <ligand>
        <name>Zn(2+)</name>
        <dbReference type="ChEBI" id="CHEBI:29105"/>
        <note>catalytic</note>
    </ligand>
</feature>
<feature type="binding site" evidence="5">
    <location>
        <position position="180"/>
    </location>
    <ligand>
        <name>Zn(2+)</name>
        <dbReference type="ChEBI" id="CHEBI:29105"/>
        <note>catalytic</note>
    </ligand>
</feature>
<feature type="binding site" evidence="5">
    <location>
        <position position="186"/>
    </location>
    <ligand>
        <name>Zn(2+)</name>
        <dbReference type="ChEBI" id="CHEBI:29105"/>
        <note>catalytic</note>
    </ligand>
</feature>
<feature type="glycosylation site" description="N-linked (GlcNAc...) asparagine" evidence="2">
    <location>
        <position position="62"/>
    </location>
</feature>
<feature type="glycosylation site" description="N-linked (GlcNAc...) asparagine" evidence="2">
    <location>
        <position position="105"/>
    </location>
</feature>
<feature type="glycosylation site" description="N-linked (GlcNAc...) asparagine" evidence="2">
    <location>
        <position position="295"/>
    </location>
</feature>
<feature type="glycosylation site" description="N-linked (GlcNAc...) asparagine" evidence="2">
    <location>
        <position position="326"/>
    </location>
</feature>
<feature type="glycosylation site" description="N-linked (GlcNAc...) asparagine" evidence="2">
    <location>
        <position position="562"/>
    </location>
</feature>
<feature type="disulfide bond" evidence="5">
    <location>
        <begin position="126"/>
        <end position="282"/>
    </location>
</feature>
<feature type="disulfide bond" evidence="5">
    <location>
        <begin position="146"/>
        <end position="168"/>
    </location>
</feature>
<feature type="disulfide bond" evidence="5">
    <location>
        <begin position="148"/>
        <end position="149"/>
    </location>
</feature>
<feature type="disulfide bond" evidence="1">
    <location>
        <begin position="285"/>
        <end position="311"/>
    </location>
</feature>
<feature type="disulfide bond" evidence="1">
    <location>
        <begin position="338"/>
        <end position="360"/>
    </location>
</feature>
<feature type="disulfide bond" evidence="1">
    <location>
        <begin position="398"/>
        <end position="424"/>
    </location>
</feature>
<feature type="disulfide bond" evidence="1">
    <location>
        <begin position="451"/>
        <end position="473"/>
    </location>
</feature>
<feature type="disulfide bond" evidence="1">
    <location>
        <begin position="514"/>
        <end position="526"/>
    </location>
</feature>
<feature type="disulfide bond" evidence="1">
    <location>
        <begin position="522"/>
        <end position="535"/>
    </location>
</feature>
<feature type="disulfide bond" evidence="1">
    <location>
        <begin position="537"/>
        <end position="550"/>
    </location>
</feature>
<feature type="disulfide bond" evidence="1">
    <location>
        <begin position="554"/>
        <end position="580"/>
    </location>
</feature>
<feature type="disulfide bond" evidence="1">
    <location>
        <begin position="607"/>
        <end position="629"/>
    </location>
</feature>
<sequence>MDYSYDLEEVVEETIDYKDPCKAAAFWGDIALDEEDLANFKIDRIVDLTKHTIHTVSGAATNISRPEKGRRTRKERRRSREKRASTSRPERVWPDGVIPYVISGNFSGSQRAIFRQAMRHWEKHTCVTFLERTDEDSYIVFTYRPCGCCSYVGRRGGGPQAISIGKNCDKFGIVVHELGHVIGFWHEHTRPDRDDHVSIIRENIQPGQEYNFLKMEPEEVESLGETYDFDSIMHYARNTFSRGIFLDTILPKYDVNGVRPPIGQRTRLSSGDVAQARKLYKCPACGETLQDSQGNFSSPGFPNGYSAYMHCVWRLSVTPGEKIILNFTSLDLYRSRLCWYDYIEVRDGFWKKAPLRGRFCGDKIPESIISTESRLWIEFRSSSNWVGKGFQAVYEALCGGEVKKDSGHIQSPNYPDDYRPNKACVWKLSVSEGFHVGISFQSFEIERHDSCAYDYLEIRDGSSETSPLVGRFCGYDKPDDIKSSTNQLWIKFVSDGSINKAGFSLNYFKEVDECSRPNNGGCEQRCVNTLGSYKCACDPGYELGQDKKSCEAACGGFLTKLNGSINSPGWPKEYPPNKNCIWQLVAPTQYRISLKFDQFETEGNDVCKYDFVEVRSGLTSDSKLHGKFCGSELPAVITSQYNNMRIEFKSDNTVSKKGFQANFFSEKKNNIQKLQQLNEVNRGQQNQAPKRVRPRMRLRTVKKTRPP</sequence>
<organism>
    <name type="scientific">Xenopus laevis</name>
    <name type="common">African clawed frog</name>
    <dbReference type="NCBI Taxonomy" id="8355"/>
    <lineage>
        <taxon>Eukaryota</taxon>
        <taxon>Metazoa</taxon>
        <taxon>Chordata</taxon>
        <taxon>Craniata</taxon>
        <taxon>Vertebrata</taxon>
        <taxon>Euteleostomi</taxon>
        <taxon>Amphibia</taxon>
        <taxon>Batrachia</taxon>
        <taxon>Anura</taxon>
        <taxon>Pipoidea</taxon>
        <taxon>Pipidae</taxon>
        <taxon>Xenopodinae</taxon>
        <taxon>Xenopus</taxon>
        <taxon>Xenopus</taxon>
    </lineage>
</organism>
<protein>
    <recommendedName>
        <fullName>Bone morphogenetic protein 1</fullName>
        <shortName>BMP-1</shortName>
        <ecNumber>3.4.24.-</ecNumber>
    </recommendedName>
</protein>
<proteinExistence type="evidence at protein level"/>
<dbReference type="EC" id="3.4.24.-"/>
<dbReference type="EMBL" id="L12249">
    <property type="protein sequence ID" value="AAA16313.1"/>
    <property type="molecule type" value="mRNA"/>
</dbReference>
<dbReference type="PIR" id="JC2218">
    <property type="entry name" value="JC2218"/>
</dbReference>
<dbReference type="SMR" id="P98070"/>
<dbReference type="IntAct" id="P98070">
    <property type="interactions" value="1"/>
</dbReference>
<dbReference type="MEROPS" id="M12.005"/>
<dbReference type="GlyCosmos" id="P98070">
    <property type="glycosylation" value="5 sites, No reported glycans"/>
</dbReference>
<dbReference type="AGR" id="Xenbase:XB-GENE-479195"/>
<dbReference type="Xenbase" id="XB-GENE-479195">
    <property type="gene designation" value="bmp1.S"/>
</dbReference>
<dbReference type="BRENDA" id="3.4.24.19">
    <property type="organism ID" value="6725"/>
</dbReference>
<dbReference type="Proteomes" id="UP000186698">
    <property type="component" value="Unplaced"/>
</dbReference>
<dbReference type="GO" id="GO:0005615">
    <property type="term" value="C:extracellular space"/>
    <property type="evidence" value="ECO:0000318"/>
    <property type="project" value="GO_Central"/>
</dbReference>
<dbReference type="GO" id="GO:0005794">
    <property type="term" value="C:Golgi apparatus"/>
    <property type="evidence" value="ECO:0007669"/>
    <property type="project" value="UniProtKB-SubCell"/>
</dbReference>
<dbReference type="GO" id="GO:0005509">
    <property type="term" value="F:calcium ion binding"/>
    <property type="evidence" value="ECO:0007669"/>
    <property type="project" value="InterPro"/>
</dbReference>
<dbReference type="GO" id="GO:0005125">
    <property type="term" value="F:cytokine activity"/>
    <property type="evidence" value="ECO:0007669"/>
    <property type="project" value="UniProtKB-KW"/>
</dbReference>
<dbReference type="GO" id="GO:0008083">
    <property type="term" value="F:growth factor activity"/>
    <property type="evidence" value="ECO:0007669"/>
    <property type="project" value="UniProtKB-KW"/>
</dbReference>
<dbReference type="GO" id="GO:0004222">
    <property type="term" value="F:metalloendopeptidase activity"/>
    <property type="evidence" value="ECO:0000318"/>
    <property type="project" value="GO_Central"/>
</dbReference>
<dbReference type="GO" id="GO:0008270">
    <property type="term" value="F:zinc ion binding"/>
    <property type="evidence" value="ECO:0007669"/>
    <property type="project" value="InterPro"/>
</dbReference>
<dbReference type="GO" id="GO:0051216">
    <property type="term" value="P:cartilage development"/>
    <property type="evidence" value="ECO:0007669"/>
    <property type="project" value="UniProtKB-KW"/>
</dbReference>
<dbReference type="GO" id="GO:0030154">
    <property type="term" value="P:cell differentiation"/>
    <property type="evidence" value="ECO:0007669"/>
    <property type="project" value="UniProtKB-KW"/>
</dbReference>
<dbReference type="GO" id="GO:0009953">
    <property type="term" value="P:dorsal/ventral pattern formation"/>
    <property type="evidence" value="ECO:0000318"/>
    <property type="project" value="GO_Central"/>
</dbReference>
<dbReference type="GO" id="GO:0001503">
    <property type="term" value="P:ossification"/>
    <property type="evidence" value="ECO:0007669"/>
    <property type="project" value="UniProtKB-KW"/>
</dbReference>
<dbReference type="GO" id="GO:0016485">
    <property type="term" value="P:protein processing"/>
    <property type="evidence" value="ECO:0000318"/>
    <property type="project" value="GO_Central"/>
</dbReference>
<dbReference type="CDD" id="cd00041">
    <property type="entry name" value="CUB"/>
    <property type="match status" value="3"/>
</dbReference>
<dbReference type="CDD" id="cd00054">
    <property type="entry name" value="EGF_CA"/>
    <property type="match status" value="1"/>
</dbReference>
<dbReference type="CDD" id="cd04281">
    <property type="entry name" value="ZnMc_BMP1_TLD"/>
    <property type="match status" value="1"/>
</dbReference>
<dbReference type="FunFam" id="2.60.120.290:FF:000013">
    <property type="entry name" value="Membrane frizzled-related protein"/>
    <property type="match status" value="1"/>
</dbReference>
<dbReference type="FunFam" id="2.10.25.10:FF:000022">
    <property type="entry name" value="Metalloendopeptidase"/>
    <property type="match status" value="1"/>
</dbReference>
<dbReference type="FunFam" id="2.60.120.290:FF:000004">
    <property type="entry name" value="Metalloendopeptidase"/>
    <property type="match status" value="1"/>
</dbReference>
<dbReference type="FunFam" id="2.60.120.290:FF:000009">
    <property type="entry name" value="Metalloendopeptidase"/>
    <property type="match status" value="1"/>
</dbReference>
<dbReference type="FunFam" id="3.40.390.10:FF:000030">
    <property type="entry name" value="Metalloendopeptidase"/>
    <property type="match status" value="1"/>
</dbReference>
<dbReference type="Gene3D" id="3.40.390.10">
    <property type="entry name" value="Collagenase (Catalytic Domain)"/>
    <property type="match status" value="1"/>
</dbReference>
<dbReference type="Gene3D" id="2.10.25.10">
    <property type="entry name" value="Laminin"/>
    <property type="match status" value="1"/>
</dbReference>
<dbReference type="Gene3D" id="2.60.120.290">
    <property type="entry name" value="Spermadhesin, CUB domain"/>
    <property type="match status" value="3"/>
</dbReference>
<dbReference type="InterPro" id="IPR015446">
    <property type="entry name" value="BMP_1/tolloid-like"/>
</dbReference>
<dbReference type="InterPro" id="IPR000859">
    <property type="entry name" value="CUB_dom"/>
</dbReference>
<dbReference type="InterPro" id="IPR001881">
    <property type="entry name" value="EGF-like_Ca-bd_dom"/>
</dbReference>
<dbReference type="InterPro" id="IPR000742">
    <property type="entry name" value="EGF-like_dom"/>
</dbReference>
<dbReference type="InterPro" id="IPR000152">
    <property type="entry name" value="EGF-type_Asp/Asn_hydroxyl_site"/>
</dbReference>
<dbReference type="InterPro" id="IPR018097">
    <property type="entry name" value="EGF_Ca-bd_CS"/>
</dbReference>
<dbReference type="InterPro" id="IPR024079">
    <property type="entry name" value="MetalloPept_cat_dom_sf"/>
</dbReference>
<dbReference type="InterPro" id="IPR001506">
    <property type="entry name" value="Peptidase_M12A"/>
</dbReference>
<dbReference type="InterPro" id="IPR006026">
    <property type="entry name" value="Peptidase_Metallo"/>
</dbReference>
<dbReference type="InterPro" id="IPR035914">
    <property type="entry name" value="Sperma_CUB_dom_sf"/>
</dbReference>
<dbReference type="InterPro" id="IPR034036">
    <property type="entry name" value="ZnMP_TLD/BMP1"/>
</dbReference>
<dbReference type="PANTHER" id="PTHR10127:SF863">
    <property type="entry name" value="BONE MORPHOGENETIC PROTEIN 1"/>
    <property type="match status" value="1"/>
</dbReference>
<dbReference type="PANTHER" id="PTHR10127">
    <property type="entry name" value="DISCOIDIN, CUB, EGF, LAMININ , AND ZINC METALLOPROTEASE DOMAIN CONTAINING"/>
    <property type="match status" value="1"/>
</dbReference>
<dbReference type="Pfam" id="PF01400">
    <property type="entry name" value="Astacin"/>
    <property type="match status" value="1"/>
</dbReference>
<dbReference type="Pfam" id="PF00431">
    <property type="entry name" value="CUB"/>
    <property type="match status" value="3"/>
</dbReference>
<dbReference type="Pfam" id="PF14670">
    <property type="entry name" value="FXa_inhibition"/>
    <property type="match status" value="1"/>
</dbReference>
<dbReference type="PIRSF" id="PIRSF001199">
    <property type="entry name" value="BMP_1/tolloid-like"/>
    <property type="match status" value="1"/>
</dbReference>
<dbReference type="PRINTS" id="PR00480">
    <property type="entry name" value="ASTACIN"/>
</dbReference>
<dbReference type="SMART" id="SM00042">
    <property type="entry name" value="CUB"/>
    <property type="match status" value="3"/>
</dbReference>
<dbReference type="SMART" id="SM00181">
    <property type="entry name" value="EGF"/>
    <property type="match status" value="1"/>
</dbReference>
<dbReference type="SMART" id="SM00179">
    <property type="entry name" value="EGF_CA"/>
    <property type="match status" value="1"/>
</dbReference>
<dbReference type="SMART" id="SM00235">
    <property type="entry name" value="ZnMc"/>
    <property type="match status" value="1"/>
</dbReference>
<dbReference type="SUPFAM" id="SSF57196">
    <property type="entry name" value="EGF/Laminin"/>
    <property type="match status" value="1"/>
</dbReference>
<dbReference type="SUPFAM" id="SSF55486">
    <property type="entry name" value="Metalloproteases ('zincins'), catalytic domain"/>
    <property type="match status" value="1"/>
</dbReference>
<dbReference type="SUPFAM" id="SSF49854">
    <property type="entry name" value="Spermadhesin, CUB domain"/>
    <property type="match status" value="3"/>
</dbReference>
<dbReference type="PROSITE" id="PS51864">
    <property type="entry name" value="ASTACIN"/>
    <property type="match status" value="1"/>
</dbReference>
<dbReference type="PROSITE" id="PS00010">
    <property type="entry name" value="ASX_HYDROXYL"/>
    <property type="match status" value="1"/>
</dbReference>
<dbReference type="PROSITE" id="PS01180">
    <property type="entry name" value="CUB"/>
    <property type="match status" value="3"/>
</dbReference>
<dbReference type="PROSITE" id="PS01186">
    <property type="entry name" value="EGF_2"/>
    <property type="match status" value="1"/>
</dbReference>
<dbReference type="PROSITE" id="PS50026">
    <property type="entry name" value="EGF_3"/>
    <property type="match status" value="1"/>
</dbReference>
<dbReference type="PROSITE" id="PS01187">
    <property type="entry name" value="EGF_CA"/>
    <property type="match status" value="1"/>
</dbReference>
<dbReference type="PROSITE" id="PS00142">
    <property type="entry name" value="ZINC_PROTEASE"/>
    <property type="match status" value="1"/>
</dbReference>
<evidence type="ECO:0000250" key="1"/>
<evidence type="ECO:0000255" key="2"/>
<evidence type="ECO:0000255" key="3">
    <source>
        <dbReference type="PROSITE-ProRule" id="PRU00059"/>
    </source>
</evidence>
<evidence type="ECO:0000255" key="4">
    <source>
        <dbReference type="PROSITE-ProRule" id="PRU00076"/>
    </source>
</evidence>
<evidence type="ECO:0000255" key="5">
    <source>
        <dbReference type="PROSITE-ProRule" id="PRU01211"/>
    </source>
</evidence>
<evidence type="ECO:0000256" key="6">
    <source>
        <dbReference type="SAM" id="MobiDB-lite"/>
    </source>
</evidence>
<evidence type="ECO:0000269" key="7">
    <source>
    </source>
</evidence>
<evidence type="ECO:0000269" key="8">
    <source>
    </source>
</evidence>
<evidence type="ECO:0000269" key="9">
    <source>
    </source>
</evidence>
<name>BMP1_XENLA</name>
<keyword id="KW-0106">Calcium</keyword>
<keyword id="KW-0891">Chondrogenesis</keyword>
<keyword id="KW-0165">Cleavage on pair of basic residues</keyword>
<keyword id="KW-0202">Cytokine</keyword>
<keyword id="KW-0217">Developmental protein</keyword>
<keyword id="KW-0221">Differentiation</keyword>
<keyword id="KW-1015">Disulfide bond</keyword>
<keyword id="KW-0245">EGF-like domain</keyword>
<keyword id="KW-0272">Extracellular matrix</keyword>
<keyword id="KW-0325">Glycoprotein</keyword>
<keyword id="KW-0333">Golgi apparatus</keyword>
<keyword id="KW-0339">Growth factor</keyword>
<keyword id="KW-0378">Hydrolase</keyword>
<keyword id="KW-0479">Metal-binding</keyword>
<keyword id="KW-0482">Metalloprotease</keyword>
<keyword id="KW-0892">Osteogenesis</keyword>
<keyword id="KW-0645">Protease</keyword>
<keyword id="KW-1185">Reference proteome</keyword>
<keyword id="KW-0677">Repeat</keyword>
<keyword id="KW-0964">Secreted</keyword>
<keyword id="KW-0732">Signal</keyword>
<keyword id="KW-0862">Zinc</keyword>
<gene>
    <name type="primary">bmp1</name>
</gene>
<reference key="1">
    <citation type="journal article" date="1993" name="Gene">
        <title>Cloning and expression of cDNA encoding Xenopus laevis bone morphogenetic protein-1 during early embryonic development.</title>
        <authorList>
            <person name="Maeno M."/>
            <person name="Xue Y."/>
            <person name="Wood T.I."/>
            <person name="Ong R.C."/>
            <person name="Kung H.F."/>
        </authorList>
    </citation>
    <scope>NUCLEOTIDE SEQUENCE [MRNA]</scope>
    <scope>FUNCTION</scope>
    <source>
        <tissue>Embryo</tissue>
    </source>
</reference>
<reference key="2">
    <citation type="journal article" date="2000" name="Dev. Biol.">
        <title>Is chordin a long-range- or short-range-acting factor? Roles for BMP1-related metalloproteases in chordin and BMP4 autofeedback loop regulation.</title>
        <authorList>
            <person name="Blitz I.L."/>
            <person name="Shimmi O."/>
            <person name="Wuennenberg-Stapleton K."/>
            <person name="O'Connor M.B."/>
            <person name="Cho K.W.Y."/>
        </authorList>
    </citation>
    <scope>FUNCTION</scope>
</reference>
<reference key="3">
    <citation type="journal article" date="2008" name="Cell">
        <title>Robust stability of the embryonic axial pattern requires a secreted scaffold for chordin degradation.</title>
        <authorList>
            <person name="Inomata H."/>
            <person name="Haraguchi T."/>
            <person name="Sasai Y."/>
        </authorList>
    </citation>
    <scope>INTERACTION WITH OLFML3</scope>
</reference>